<name>TSAC_MYCLE</name>
<protein>
    <recommendedName>
        <fullName>Putative threonylcarbamoyl-AMP synthase</fullName>
        <shortName>TC-AMP synthase</shortName>
        <ecNumber>2.7.7.87</ecNumber>
    </recommendedName>
    <alternativeName>
        <fullName>L-threonylcarbamoyladenylate synthase</fullName>
    </alternativeName>
    <alternativeName>
        <fullName>tRNA threonylcarbamoyladenosine biosynthesis protein ML1136</fullName>
    </alternativeName>
</protein>
<dbReference type="EC" id="2.7.7.87"/>
<dbReference type="EMBL" id="U15186">
    <property type="protein sequence ID" value="AAA63091.1"/>
    <property type="molecule type" value="Genomic_DNA"/>
</dbReference>
<dbReference type="EMBL" id="AL583920">
    <property type="protein sequence ID" value="CAC31517.1"/>
    <property type="molecule type" value="Genomic_DNA"/>
</dbReference>
<dbReference type="PIR" id="T09983">
    <property type="entry name" value="T09983"/>
</dbReference>
<dbReference type="RefSeq" id="NP_301830.1">
    <property type="nucleotide sequence ID" value="NC_002677.1"/>
</dbReference>
<dbReference type="SMR" id="P45831"/>
<dbReference type="STRING" id="272631.gene:17574963"/>
<dbReference type="KEGG" id="mle:ML1136"/>
<dbReference type="PATRIC" id="fig|272631.5.peg.2058"/>
<dbReference type="Leproma" id="ML1136"/>
<dbReference type="eggNOG" id="COG0009">
    <property type="taxonomic scope" value="Bacteria"/>
</dbReference>
<dbReference type="HOGENOM" id="CLU_031397_3_1_11"/>
<dbReference type="OrthoDB" id="9814580at2"/>
<dbReference type="Proteomes" id="UP000000806">
    <property type="component" value="Chromosome"/>
</dbReference>
<dbReference type="GO" id="GO:0005737">
    <property type="term" value="C:cytoplasm"/>
    <property type="evidence" value="ECO:0007669"/>
    <property type="project" value="UniProtKB-SubCell"/>
</dbReference>
<dbReference type="GO" id="GO:0005524">
    <property type="term" value="F:ATP binding"/>
    <property type="evidence" value="ECO:0007669"/>
    <property type="project" value="UniProtKB-KW"/>
</dbReference>
<dbReference type="GO" id="GO:0003725">
    <property type="term" value="F:double-stranded RNA binding"/>
    <property type="evidence" value="ECO:0007669"/>
    <property type="project" value="InterPro"/>
</dbReference>
<dbReference type="GO" id="GO:0061710">
    <property type="term" value="F:L-threonylcarbamoyladenylate synthase"/>
    <property type="evidence" value="ECO:0007669"/>
    <property type="project" value="UniProtKB-EC"/>
</dbReference>
<dbReference type="GO" id="GO:0000049">
    <property type="term" value="F:tRNA binding"/>
    <property type="evidence" value="ECO:0007669"/>
    <property type="project" value="TreeGrafter"/>
</dbReference>
<dbReference type="GO" id="GO:0006450">
    <property type="term" value="P:regulation of translational fidelity"/>
    <property type="evidence" value="ECO:0007669"/>
    <property type="project" value="TreeGrafter"/>
</dbReference>
<dbReference type="GO" id="GO:0008033">
    <property type="term" value="P:tRNA processing"/>
    <property type="evidence" value="ECO:0007669"/>
    <property type="project" value="UniProtKB-KW"/>
</dbReference>
<dbReference type="Gene3D" id="3.90.870.10">
    <property type="entry name" value="DHBP synthase"/>
    <property type="match status" value="1"/>
</dbReference>
<dbReference type="InterPro" id="IPR017945">
    <property type="entry name" value="DHBP_synth_RibB-like_a/b_dom"/>
</dbReference>
<dbReference type="InterPro" id="IPR006070">
    <property type="entry name" value="Sua5-like_dom"/>
</dbReference>
<dbReference type="InterPro" id="IPR050156">
    <property type="entry name" value="TC-AMP_synthase_SUA5"/>
</dbReference>
<dbReference type="NCBIfam" id="TIGR00057">
    <property type="entry name" value="L-threonylcarbamoyladenylate synthase"/>
    <property type="match status" value="1"/>
</dbReference>
<dbReference type="PANTHER" id="PTHR17490">
    <property type="entry name" value="SUA5"/>
    <property type="match status" value="1"/>
</dbReference>
<dbReference type="PANTHER" id="PTHR17490:SF16">
    <property type="entry name" value="THREONYLCARBAMOYL-AMP SYNTHASE"/>
    <property type="match status" value="1"/>
</dbReference>
<dbReference type="Pfam" id="PF01300">
    <property type="entry name" value="Sua5_yciO_yrdC"/>
    <property type="match status" value="1"/>
</dbReference>
<dbReference type="SUPFAM" id="SSF55821">
    <property type="entry name" value="YrdC/RibB"/>
    <property type="match status" value="1"/>
</dbReference>
<dbReference type="PROSITE" id="PS51163">
    <property type="entry name" value="YRDC"/>
    <property type="match status" value="1"/>
</dbReference>
<keyword id="KW-0067">ATP-binding</keyword>
<keyword id="KW-0963">Cytoplasm</keyword>
<keyword id="KW-0547">Nucleotide-binding</keyword>
<keyword id="KW-0548">Nucleotidyltransferase</keyword>
<keyword id="KW-1185">Reference proteome</keyword>
<keyword id="KW-0808">Transferase</keyword>
<keyword id="KW-0819">tRNA processing</keyword>
<proteinExistence type="inferred from homology"/>
<comment type="function">
    <text evidence="1">Required for the formation of a threonylcarbamoyl group on adenosine at position 37 (t(6)A37) in tRNAs that read codons beginning with adenine. Catalyzes the conversion of L-threonine, HCO(3)(-)/CO(2) and ATP to give threonylcarbamoyl-AMP (TC-AMP) as the acyladenylate intermediate, with the release of diphosphate.</text>
</comment>
<comment type="catalytic activity">
    <reaction>
        <text>L-threonine + hydrogencarbonate + ATP = L-threonylcarbamoyladenylate + diphosphate + H2O</text>
        <dbReference type="Rhea" id="RHEA:36407"/>
        <dbReference type="ChEBI" id="CHEBI:15377"/>
        <dbReference type="ChEBI" id="CHEBI:17544"/>
        <dbReference type="ChEBI" id="CHEBI:30616"/>
        <dbReference type="ChEBI" id="CHEBI:33019"/>
        <dbReference type="ChEBI" id="CHEBI:57926"/>
        <dbReference type="ChEBI" id="CHEBI:73682"/>
        <dbReference type="EC" id="2.7.7.87"/>
    </reaction>
</comment>
<comment type="subcellular location">
    <subcellularLocation>
        <location evidence="3">Cytoplasm</location>
    </subcellularLocation>
</comment>
<comment type="similarity">
    <text evidence="3">Belongs to the SUA5 family.</text>
</comment>
<gene>
    <name type="ordered locus">ML1136</name>
</gene>
<accession>P45831</accession>
<feature type="chain" id="PRO_0000202024" description="Putative threonylcarbamoyl-AMP synthase">
    <location>
        <begin position="1"/>
        <end position="220"/>
    </location>
</feature>
<feature type="domain" description="YrdC-like" evidence="2">
    <location>
        <begin position="17"/>
        <end position="202"/>
    </location>
</feature>
<reference key="1">
    <citation type="submission" date="1994-09" db="EMBL/GenBank/DDBJ databases">
        <authorList>
            <person name="Smith D.R."/>
            <person name="Robison K."/>
        </authorList>
    </citation>
    <scope>NUCLEOTIDE SEQUENCE [GENOMIC DNA]</scope>
</reference>
<reference key="2">
    <citation type="journal article" date="2001" name="Nature">
        <title>Massive gene decay in the leprosy bacillus.</title>
        <authorList>
            <person name="Cole S.T."/>
            <person name="Eiglmeier K."/>
            <person name="Parkhill J."/>
            <person name="James K.D."/>
            <person name="Thomson N.R."/>
            <person name="Wheeler P.R."/>
            <person name="Honore N."/>
            <person name="Garnier T."/>
            <person name="Churcher C.M."/>
            <person name="Harris D.E."/>
            <person name="Mungall K.L."/>
            <person name="Basham D."/>
            <person name="Brown D."/>
            <person name="Chillingworth T."/>
            <person name="Connor R."/>
            <person name="Davies R.M."/>
            <person name="Devlin K."/>
            <person name="Duthoy S."/>
            <person name="Feltwell T."/>
            <person name="Fraser A."/>
            <person name="Hamlin N."/>
            <person name="Holroyd S."/>
            <person name="Hornsby T."/>
            <person name="Jagels K."/>
            <person name="Lacroix C."/>
            <person name="Maclean J."/>
            <person name="Moule S."/>
            <person name="Murphy L.D."/>
            <person name="Oliver K."/>
            <person name="Quail M.A."/>
            <person name="Rajandream M.A."/>
            <person name="Rutherford K.M."/>
            <person name="Rutter S."/>
            <person name="Seeger K."/>
            <person name="Simon S."/>
            <person name="Simmonds M."/>
            <person name="Skelton J."/>
            <person name="Squares R."/>
            <person name="Squares S."/>
            <person name="Stevens K."/>
            <person name="Taylor K."/>
            <person name="Whitehead S."/>
            <person name="Woodward J.R."/>
            <person name="Barrell B.G."/>
        </authorList>
    </citation>
    <scope>NUCLEOTIDE SEQUENCE [LARGE SCALE GENOMIC DNA]</scope>
    <source>
        <strain>TN</strain>
    </source>
</reference>
<organism>
    <name type="scientific">Mycobacterium leprae (strain TN)</name>
    <dbReference type="NCBI Taxonomy" id="272631"/>
    <lineage>
        <taxon>Bacteria</taxon>
        <taxon>Bacillati</taxon>
        <taxon>Actinomycetota</taxon>
        <taxon>Actinomycetes</taxon>
        <taxon>Mycobacteriales</taxon>
        <taxon>Mycobacteriaceae</taxon>
        <taxon>Mycobacterium</taxon>
    </lineage>
</organism>
<sequence>MVRMNEVFDCADPDQRARGIASAVAALKGGRLVVMPTDTVYGIGADAFDRAAVAALLSAKGRGRDMPVGVLVGSWHTIEGLVYTMPDGARELIRAFWPGALSLVVVHAPSLNWDLGDAHGTVMLRMPLHSVAIELLCEVGPMAVSSANVSGQPAAVDVDGARGQLGELVGVYLDAGPSAQQAASTIVDLTEATPRILRAGPVSVARIAEVLGVVPASLIA</sequence>
<evidence type="ECO:0000250" key="1"/>
<evidence type="ECO:0000255" key="2">
    <source>
        <dbReference type="PROSITE-ProRule" id="PRU00518"/>
    </source>
</evidence>
<evidence type="ECO:0000305" key="3"/>